<name>IF4G2_HUMAN</name>
<reference evidence="17" key="1">
    <citation type="journal article" date="1997" name="EMBO J.">
        <title>A new translational regulator with homology to eukaryotic translation initiation factor 4G.</title>
        <authorList>
            <person name="Imataka H."/>
            <person name="Olsen H.S."/>
            <person name="Sonenberg N."/>
        </authorList>
    </citation>
    <scope>NUCLEOTIDE SEQUENCE [MRNA] (ISOFORM 1)</scope>
    <scope>FUNCTION</scope>
    <scope>TISSUE SPECIFICITY</scope>
    <scope>IDENTIFICATION OF A NON-AUG INITIATOR START CODON</scope>
    <scope>INTERACTION WITH EIF4A AND EIF3</scope>
    <source>
        <tissue evidence="12">Placenta</tissue>
    </source>
</reference>
<reference evidence="17" key="2">
    <citation type="journal article" date="1997" name="Genes Dev.">
        <title>A novel translational repressor mRNA is edited extensively in livers containing tumors caused by the transgene expression of the apoB mRNA-editing enzyme.</title>
        <authorList>
            <person name="Yamanaka S."/>
            <person name="Poksay K.S."/>
            <person name="Arnold K.S."/>
            <person name="Innerarity T.L."/>
        </authorList>
    </citation>
    <scope>NUCLEOTIDE SEQUENCE [MRNA] (ISOFORM 1)</scope>
    <scope>TISSUE SPECIFICITY</scope>
    <scope>INTERACTION WITH EIF4A</scope>
    <source>
        <tissue evidence="10">Liver</tissue>
    </source>
</reference>
<reference evidence="17" key="3">
    <citation type="journal article" date="1997" name="Mol. Cell. Biol.">
        <title>DAP-5, a novel homolog of eukaryotic translation initiation factor 4G isolated as a putative modulator of gamma interferon-induced programmed cell death.</title>
        <authorList>
            <person name="Levy-Strumpf N."/>
            <person name="Deiss L.P."/>
            <person name="Berissi H."/>
            <person name="Kimchi A."/>
        </authorList>
    </citation>
    <scope>NUCLEOTIDE SEQUENCE [MRNA] (ISOFORM 1)</scope>
    <scope>FUNCTION</scope>
    <scope>TISSUE SPECIFICITY</scope>
    <source>
        <tissue evidence="11">Kidney</tissue>
    </source>
</reference>
<reference evidence="17" key="4">
    <citation type="submission" date="2005-04" db="EMBL/GenBank/DDBJ databases">
        <authorList>
            <person name="Totoki Y."/>
            <person name="Toyoda A."/>
            <person name="Takeda T."/>
            <person name="Sakaki Y."/>
            <person name="Tanaka A."/>
            <person name="Yokoyama S."/>
        </authorList>
    </citation>
    <scope>NUCLEOTIDE SEQUENCE [LARGE SCALE MRNA] (ISOFORM 1)</scope>
    <source>
        <tissue>Kidney</tissue>
    </source>
</reference>
<reference key="5">
    <citation type="journal article" date="2006" name="Nature">
        <title>Human chromosome 11 DNA sequence and analysis including novel gene identification.</title>
        <authorList>
            <person name="Taylor T.D."/>
            <person name="Noguchi H."/>
            <person name="Totoki Y."/>
            <person name="Toyoda A."/>
            <person name="Kuroki Y."/>
            <person name="Dewar K."/>
            <person name="Lloyd C."/>
            <person name="Itoh T."/>
            <person name="Takeda T."/>
            <person name="Kim D.-W."/>
            <person name="She X."/>
            <person name="Barlow K.F."/>
            <person name="Bloom T."/>
            <person name="Bruford E."/>
            <person name="Chang J.L."/>
            <person name="Cuomo C.A."/>
            <person name="Eichler E."/>
            <person name="FitzGerald M.G."/>
            <person name="Jaffe D.B."/>
            <person name="LaButti K."/>
            <person name="Nicol R."/>
            <person name="Park H.-S."/>
            <person name="Seaman C."/>
            <person name="Sougnez C."/>
            <person name="Yang X."/>
            <person name="Zimmer A.R."/>
            <person name="Zody M.C."/>
            <person name="Birren B.W."/>
            <person name="Nusbaum C."/>
            <person name="Fujiyama A."/>
            <person name="Hattori M."/>
            <person name="Rogers J."/>
            <person name="Lander E.S."/>
            <person name="Sakaki Y."/>
        </authorList>
    </citation>
    <scope>NUCLEOTIDE SEQUENCE [LARGE SCALE GENOMIC DNA]</scope>
</reference>
<reference evidence="17" key="6">
    <citation type="journal article" date="2004" name="Genome Res.">
        <title>The status, quality, and expansion of the NIH full-length cDNA project: the Mammalian Gene Collection (MGC).</title>
        <authorList>
            <consortium name="The MGC Project Team"/>
        </authorList>
    </citation>
    <scope>NUCLEOTIDE SEQUENCE [LARGE SCALE MRNA] (ISOFORMS 1 AND 2)</scope>
    <source>
        <tissue>Retinal pigment epithelium</tissue>
        <tissue evidence="7">Skin</tissue>
        <tissue evidence="7">Testis</tissue>
    </source>
</reference>
<reference evidence="17" key="7">
    <citation type="journal article" date="2003" name="Nat. Biotechnol.">
        <title>Exploring proteomes and analyzing protein processing by mass spectrometric identification of sorted N-terminal peptides.</title>
        <authorList>
            <person name="Gevaert K."/>
            <person name="Goethals M."/>
            <person name="Martens L."/>
            <person name="Van Damme J."/>
            <person name="Staes A."/>
            <person name="Thomas G.R."/>
            <person name="Vandekerckhove J."/>
        </authorList>
    </citation>
    <scope>PROTEIN SEQUENCE OF 1-12</scope>
    <scope>ACETYLATION AT MET-1</scope>
    <source>
        <tissue evidence="6">Platelet</tissue>
    </source>
</reference>
<reference evidence="17" key="8">
    <citation type="submission" date="2001-06" db="EMBL/GenBank/DDBJ databases">
        <title>Identification of immuno-peptidmics that are recognized by tumor-reactive CTL generated from TIL of colon cancer patients.</title>
        <authorList>
            <person name="Shichijo S."/>
            <person name="Itoh K."/>
        </authorList>
    </citation>
    <scope>NUCLEOTIDE SEQUENCE [LARGE SCALE MRNA] OF 679-907</scope>
    <source>
        <tissue evidence="14">Colon adenocarcinoma</tissue>
    </source>
</reference>
<reference evidence="17" key="9">
    <citation type="journal article" date="1999" name="EMBO J.">
        <title>Human eukaryotic translation initiation factor 4G (eIF4G) recruits mnk1 to phosphorylate eIF4E.</title>
        <authorList>
            <person name="Pyronnet S."/>
            <person name="Imataka H."/>
            <person name="Gingras A.-C."/>
            <person name="Fukunaga R."/>
            <person name="Hunter T."/>
            <person name="Sonenberg N."/>
        </authorList>
    </citation>
    <scope>INTERACTION WITH MKNK1</scope>
</reference>
<reference evidence="17" key="10">
    <citation type="journal article" date="2001" name="Genes Dev.">
        <title>Suppression of cap-dependent translation in mitosis.</title>
        <authorList>
            <person name="Pyronnet S."/>
            <person name="Dostie J."/>
            <person name="Sonenberg N."/>
        </authorList>
    </citation>
    <scope>FUNCTION</scope>
    <scope>PHOSPHORYLATION</scope>
</reference>
<reference evidence="17" key="11">
    <citation type="journal article" date="2002" name="Proc. Natl. Acad. Sci. U.S.A.">
        <title>The caspase-cleaved DAP5 protein supports internal ribosome entry site-mediated translation of death proteins.</title>
        <authorList>
            <person name="Henis-Korenblit S."/>
            <person name="Shani G."/>
            <person name="Sines T."/>
            <person name="Marash L."/>
            <person name="Shohat G."/>
            <person name="Kimchi A."/>
        </authorList>
    </citation>
    <scope>FUNCTION</scope>
</reference>
<reference key="12">
    <citation type="journal article" date="2006" name="Nat. Biotechnol.">
        <title>A probability-based approach for high-throughput protein phosphorylation analysis and site localization.</title>
        <authorList>
            <person name="Beausoleil S.A."/>
            <person name="Villen J."/>
            <person name="Gerber S.A."/>
            <person name="Rush J."/>
            <person name="Gygi S.P."/>
        </authorList>
    </citation>
    <scope>IDENTIFICATION BY MASS SPECTROMETRY [LARGE SCALE ANALYSIS]</scope>
    <source>
        <tissue>Cervix carcinoma</tissue>
    </source>
</reference>
<reference key="13">
    <citation type="journal article" date="2008" name="J. Proteome Res.">
        <title>Phosphoproteome of resting human platelets.</title>
        <authorList>
            <person name="Zahedi R.P."/>
            <person name="Lewandrowski U."/>
            <person name="Wiesner J."/>
            <person name="Wortelkamp S."/>
            <person name="Moebius J."/>
            <person name="Schuetz C."/>
            <person name="Walter U."/>
            <person name="Gambaryan S."/>
            <person name="Sickmann A."/>
        </authorList>
    </citation>
    <scope>IDENTIFICATION BY MASS SPECTROMETRY [LARGE SCALE ANALYSIS]</scope>
    <source>
        <tissue>Platelet</tissue>
    </source>
</reference>
<reference key="14">
    <citation type="journal article" date="2008" name="Mol. Cell. Biol.">
        <title>Proline-rich transcript in brain protein induces stress granule formation.</title>
        <authorList>
            <person name="Kim J.E."/>
            <person name="Ryu I."/>
            <person name="Kim W.J."/>
            <person name="Song O.K."/>
            <person name="Ryu J."/>
            <person name="Kwon M.Y."/>
            <person name="Kim J.H."/>
            <person name="Jang S.K."/>
        </authorList>
    </citation>
    <scope>INTERACTION WITH DAZAP2</scope>
</reference>
<reference key="15">
    <citation type="journal article" date="2008" name="Mol. Cell. Biol.">
        <title>SLIP1, a factor required for activation of histone mRNA translation by the stem-loop binding protein.</title>
        <authorList>
            <person name="Cakmakci N.G."/>
            <person name="Lerner R.S."/>
            <person name="Wagner E.J."/>
            <person name="Zheng L."/>
            <person name="Marzluff W.F."/>
        </authorList>
    </citation>
    <scope>INTERACTION WITH MIF4GD</scope>
</reference>
<reference key="16">
    <citation type="journal article" date="2008" name="Proc. Natl. Acad. Sci. U.S.A.">
        <title>A quantitative atlas of mitotic phosphorylation.</title>
        <authorList>
            <person name="Dephoure N."/>
            <person name="Zhou C."/>
            <person name="Villen J."/>
            <person name="Beausoleil S.A."/>
            <person name="Bakalarski C.E."/>
            <person name="Elledge S.J."/>
            <person name="Gygi S.P."/>
        </authorList>
    </citation>
    <scope>PHOSPHORYLATION [LARGE SCALE ANALYSIS] AT THR-514</scope>
    <scope>IDENTIFICATION BY MASS SPECTROMETRY [LARGE SCALE ANALYSIS]</scope>
    <source>
        <tissue>Cervix carcinoma</tissue>
    </source>
</reference>
<reference key="17">
    <citation type="journal article" date="2009" name="Anal. Chem.">
        <title>Lys-N and trypsin cover complementary parts of the phosphoproteome in a refined SCX-based approach.</title>
        <authorList>
            <person name="Gauci S."/>
            <person name="Helbig A.O."/>
            <person name="Slijper M."/>
            <person name="Krijgsveld J."/>
            <person name="Heck A.J."/>
            <person name="Mohammed S."/>
        </authorList>
    </citation>
    <scope>ACETYLATION [LARGE SCALE ANALYSIS] AT MET-1</scope>
    <scope>IDENTIFICATION BY MASS SPECTROMETRY [LARGE SCALE ANALYSIS]</scope>
</reference>
<reference key="18">
    <citation type="journal article" date="2009" name="Sci. Signal.">
        <title>Quantitative phosphoproteomic analysis of T cell receptor signaling reveals system-wide modulation of protein-protein interactions.</title>
        <authorList>
            <person name="Mayya V."/>
            <person name="Lundgren D.H."/>
            <person name="Hwang S.-I."/>
            <person name="Rezaul K."/>
            <person name="Wu L."/>
            <person name="Eng J.K."/>
            <person name="Rodionov V."/>
            <person name="Han D.K."/>
        </authorList>
    </citation>
    <scope>PHOSPHORYLATION [LARGE SCALE ANALYSIS] AT THR-508</scope>
    <scope>IDENTIFICATION BY MASS SPECTROMETRY [LARGE SCALE ANALYSIS]</scope>
    <source>
        <tissue>Leukemic T-cell</tissue>
    </source>
</reference>
<reference key="19">
    <citation type="journal article" date="2010" name="Sci. Signal.">
        <title>Quantitative phosphoproteomics reveals widespread full phosphorylation site occupancy during mitosis.</title>
        <authorList>
            <person name="Olsen J.V."/>
            <person name="Vermeulen M."/>
            <person name="Santamaria A."/>
            <person name="Kumar C."/>
            <person name="Miller M.L."/>
            <person name="Jensen L.J."/>
            <person name="Gnad F."/>
            <person name="Cox J."/>
            <person name="Jensen T.S."/>
            <person name="Nigg E.A."/>
            <person name="Brunak S."/>
            <person name="Mann M."/>
        </authorList>
    </citation>
    <scope>PHOSPHORYLATION [LARGE SCALE ANALYSIS] AT SER-395 AND SER-902</scope>
    <scope>IDENTIFICATION BY MASS SPECTROMETRY [LARGE SCALE ANALYSIS]</scope>
    <source>
        <tissue>Cervix carcinoma</tissue>
    </source>
</reference>
<reference key="20">
    <citation type="journal article" date="2011" name="BMC Syst. Biol.">
        <title>Initial characterization of the human central proteome.</title>
        <authorList>
            <person name="Burkard T.R."/>
            <person name="Planyavsky M."/>
            <person name="Kaupe I."/>
            <person name="Breitwieser F.P."/>
            <person name="Buerckstuemmer T."/>
            <person name="Bennett K.L."/>
            <person name="Superti-Furga G."/>
            <person name="Colinge J."/>
        </authorList>
    </citation>
    <scope>IDENTIFICATION BY MASS SPECTROMETRY [LARGE SCALE ANALYSIS]</scope>
</reference>
<reference key="21">
    <citation type="journal article" date="2011" name="Sci. Signal.">
        <title>System-wide temporal characterization of the proteome and phosphoproteome of human embryonic stem cell differentiation.</title>
        <authorList>
            <person name="Rigbolt K.T."/>
            <person name="Prokhorova T.A."/>
            <person name="Akimov V."/>
            <person name="Henningsen J."/>
            <person name="Johansen P.T."/>
            <person name="Kratchmarova I."/>
            <person name="Kassem M."/>
            <person name="Mann M."/>
            <person name="Olsen J.V."/>
            <person name="Blagoev B."/>
        </authorList>
    </citation>
    <scope>PHOSPHORYLATION [LARGE SCALE ANALYSIS] AT SER-902</scope>
    <scope>IDENTIFICATION BY MASS SPECTROMETRY [LARGE SCALE ANALYSIS]</scope>
</reference>
<reference key="22">
    <citation type="journal article" date="2012" name="Mol. Cell. Proteomics">
        <title>Comparative large-scale characterisation of plant vs. mammal proteins reveals similar and idiosyncratic N-alpha acetylation features.</title>
        <authorList>
            <person name="Bienvenut W.V."/>
            <person name="Sumpton D."/>
            <person name="Martinez A."/>
            <person name="Lilla S."/>
            <person name="Espagne C."/>
            <person name="Meinnel T."/>
            <person name="Giglione C."/>
        </authorList>
    </citation>
    <scope>ACETYLATION [LARGE SCALE ANALYSIS] AT MET-1</scope>
    <scope>IDENTIFICATION BY MASS SPECTROMETRY [LARGE SCALE ANALYSIS]</scope>
</reference>
<reference key="23">
    <citation type="journal article" date="2012" name="Proc. Natl. Acad. Sci. U.S.A.">
        <title>N-terminal acetylome analyses and functional insights of the N-terminal acetyltransferase NatB.</title>
        <authorList>
            <person name="Van Damme P."/>
            <person name="Lasa M."/>
            <person name="Polevoda B."/>
            <person name="Gazquez C."/>
            <person name="Elosegui-Artola A."/>
            <person name="Kim D.S."/>
            <person name="De Juan-Pardo E."/>
            <person name="Demeyer K."/>
            <person name="Hole K."/>
            <person name="Larrea E."/>
            <person name="Timmerman E."/>
            <person name="Prieto J."/>
            <person name="Arnesen T."/>
            <person name="Sherman F."/>
            <person name="Gevaert K."/>
            <person name="Aldabe R."/>
        </authorList>
    </citation>
    <scope>ACETYLATION [LARGE SCALE ANALYSIS] AT MET-1</scope>
    <scope>IDENTIFICATION BY MASS SPECTROMETRY [LARGE SCALE ANALYSIS]</scope>
</reference>
<reference key="24">
    <citation type="journal article" date="2013" name="J. Proteome Res.">
        <title>Toward a comprehensive characterization of a human cancer cell phosphoproteome.</title>
        <authorList>
            <person name="Zhou H."/>
            <person name="Di Palma S."/>
            <person name="Preisinger C."/>
            <person name="Peng M."/>
            <person name="Polat A.N."/>
            <person name="Heck A.J."/>
            <person name="Mohammed S."/>
        </authorList>
    </citation>
    <scope>PHOSPHORYLATION [LARGE SCALE ANALYSIS] AT SER-11; THR-89; SER-443 AND THR-508</scope>
    <scope>IDENTIFICATION BY MASS SPECTROMETRY [LARGE SCALE ANALYSIS]</scope>
    <source>
        <tissue>Cervix carcinoma</tissue>
        <tissue>Erythroleukemia</tissue>
    </source>
</reference>
<reference key="25">
    <citation type="journal article" date="2014" name="J. Proteomics">
        <title>An enzyme assisted RP-RPLC approach for in-depth analysis of human liver phosphoproteome.</title>
        <authorList>
            <person name="Bian Y."/>
            <person name="Song C."/>
            <person name="Cheng K."/>
            <person name="Dong M."/>
            <person name="Wang F."/>
            <person name="Huang J."/>
            <person name="Sun D."/>
            <person name="Wang L."/>
            <person name="Ye M."/>
            <person name="Zou H."/>
        </authorList>
    </citation>
    <scope>PHOSPHORYLATION [LARGE SCALE ANALYSIS] AT THR-508</scope>
    <scope>IDENTIFICATION BY MASS SPECTROMETRY [LARGE SCALE ANALYSIS]</scope>
    <source>
        <tissue>Liver</tissue>
    </source>
</reference>
<reference key="26">
    <citation type="journal article" date="2014" name="Mol. Cell. Proteomics">
        <title>Immunoaffinity enrichment and mass spectrometry analysis of protein methylation.</title>
        <authorList>
            <person name="Guo A."/>
            <person name="Gu H."/>
            <person name="Zhou J."/>
            <person name="Mulhern D."/>
            <person name="Wang Y."/>
            <person name="Lee K.A."/>
            <person name="Yang V."/>
            <person name="Aguiar M."/>
            <person name="Kornhauser J."/>
            <person name="Jia X."/>
            <person name="Ren J."/>
            <person name="Beausoleil S.A."/>
            <person name="Silva J.C."/>
            <person name="Vemulapalli V."/>
            <person name="Bedford M.T."/>
            <person name="Comb M.J."/>
        </authorList>
    </citation>
    <scope>METHYLATION [LARGE SCALE ANALYSIS] AT ARG-360; LYS-431 AND ARG-505</scope>
    <scope>IDENTIFICATION BY MASS SPECTROMETRY [LARGE SCALE ANALYSIS]</scope>
    <source>
        <tissue>Colon carcinoma</tissue>
    </source>
</reference>
<reference key="27">
    <citation type="journal article" date="2017" name="Nat. Struct. Mol. Biol.">
        <title>Site-specific mapping of the human SUMO proteome reveals co-modification with phosphorylation.</title>
        <authorList>
            <person name="Hendriks I.A."/>
            <person name="Lyon D."/>
            <person name="Young C."/>
            <person name="Jensen L.J."/>
            <person name="Vertegaal A.C."/>
            <person name="Nielsen M.L."/>
        </authorList>
    </citation>
    <scope>SUMOYLATION [LARGE SCALE ANALYSIS] AT LYS-575</scope>
    <scope>IDENTIFICATION BY MASS SPECTROMETRY [LARGE SCALE ANALYSIS]</scope>
</reference>
<feature type="chain" id="PRO_0000213325" description="Eukaryotic translation initiation factor 4 gamma 2">
    <location>
        <begin position="1"/>
        <end position="907"/>
    </location>
</feature>
<feature type="domain" description="MIF4G" evidence="2">
    <location>
        <begin position="78"/>
        <end position="308"/>
    </location>
</feature>
<feature type="domain" description="MI" evidence="2">
    <location>
        <begin position="543"/>
        <end position="666"/>
    </location>
</feature>
<feature type="domain" description="W2" evidence="1">
    <location>
        <begin position="720"/>
        <end position="904"/>
    </location>
</feature>
<feature type="region of interest" description="Disordered" evidence="3">
    <location>
        <begin position="1"/>
        <end position="71"/>
    </location>
</feature>
<feature type="region of interest" description="Disordered" evidence="3">
    <location>
        <begin position="498"/>
        <end position="541"/>
    </location>
</feature>
<feature type="compositionally biased region" description="Polar residues" evidence="3">
    <location>
        <begin position="503"/>
        <end position="516"/>
    </location>
</feature>
<feature type="modified residue" description="N-acetylmethionine" evidence="6 20 24 25">
    <location>
        <position position="1"/>
    </location>
</feature>
<feature type="modified residue" description="Phosphoserine" evidence="26">
    <location>
        <position position="11"/>
    </location>
</feature>
<feature type="modified residue" description="Phosphothreonine" evidence="26">
    <location>
        <position position="89"/>
    </location>
</feature>
<feature type="modified residue" description="Omega-N-methylarginine" evidence="27">
    <location>
        <position position="360"/>
    </location>
</feature>
<feature type="modified residue" description="Phosphoserine" evidence="22">
    <location>
        <position position="395"/>
    </location>
</feature>
<feature type="modified residue" description="N6-methyllysine" evidence="27">
    <location>
        <position position="431"/>
    </location>
</feature>
<feature type="modified residue" description="Phosphoserine" evidence="26">
    <location>
        <position position="443"/>
    </location>
</feature>
<feature type="modified residue" description="Omega-N-methylarginine" evidence="27">
    <location>
        <position position="505"/>
    </location>
</feature>
<feature type="modified residue" description="Phosphothreonine" evidence="21 26 28">
    <location>
        <position position="508"/>
    </location>
</feature>
<feature type="modified residue" description="Phosphothreonine" evidence="19">
    <location>
        <position position="514"/>
    </location>
</feature>
<feature type="modified residue" description="Phosphoserine" evidence="22 23">
    <location>
        <position position="902"/>
    </location>
</feature>
<feature type="cross-link" description="Glycyl lysine isopeptide (Lys-Gly) (interchain with G-Cter in SUMO2)" evidence="29">
    <location>
        <position position="575"/>
    </location>
</feature>
<feature type="splice variant" id="VSP_038726" description="In isoform 2." evidence="15">
    <location>
        <begin position="434"/>
        <end position="471"/>
    </location>
</feature>
<feature type="sequence variant" id="VAR_048923" description="In dbSNP:rs34885591.">
    <original>L</original>
    <variation>M</variation>
    <location>
        <position position="236"/>
    </location>
</feature>
<feature type="sequence conflict" description="In Ref. 2; AAC51166." evidence="17" ref="2">
    <original>S</original>
    <variation>P</variation>
    <location>
        <position position="169"/>
    </location>
</feature>
<feature type="sequence conflict" description="In Ref. 2; AAC51166." evidence="17" ref="2">
    <original>K</original>
    <variation>Q</variation>
    <location>
        <position position="233"/>
    </location>
</feature>
<feature type="sequence conflict" description="In Ref. 2; AAC51166." evidence="17" ref="2">
    <original>K</original>
    <variation>Q</variation>
    <location>
        <position position="245"/>
    </location>
</feature>
<feature type="sequence conflict" description="In Ref. 2; AAC51166." evidence="17" ref="2">
    <original>F</original>
    <variation>L</variation>
    <location>
        <position position="351"/>
    </location>
</feature>
<feature type="sequence conflict" description="In Ref. 6; AAH18746." evidence="17" ref="6">
    <original>N</original>
    <variation>S</variation>
    <location>
        <position position="441"/>
    </location>
</feature>
<feature type="sequence conflict" description="In Ref. 2; AAC51166." evidence="17" ref="2">
    <original>A</original>
    <variation>G</variation>
    <location>
        <position position="531"/>
    </location>
</feature>
<feature type="sequence conflict" description="In Ref. 6; AAH43149." evidence="17" ref="6">
    <original>S</original>
    <variation>N</variation>
    <location>
        <position position="534"/>
    </location>
</feature>
<feature type="sequence conflict" description="In Ref. 2; AAC51166." evidence="17" ref="2">
    <original>A</original>
    <variation>G</variation>
    <location>
        <position position="613"/>
    </location>
</feature>
<feature type="sequence conflict" description="In Ref. 2; AAC51166." evidence="17" ref="2">
    <original>I</original>
    <variation>S</variation>
    <location>
        <position position="861"/>
    </location>
</feature>
<feature type="sequence conflict" description="In Ref. 2; AAC51166." evidence="17" ref="2">
    <original>E</original>
    <variation>G</variation>
    <location>
        <position position="899"/>
    </location>
</feature>
<feature type="helix" evidence="32">
    <location>
        <begin position="68"/>
        <end position="86"/>
    </location>
</feature>
<feature type="turn" evidence="32">
    <location>
        <begin position="90"/>
        <end position="92"/>
    </location>
</feature>
<feature type="helix" evidence="32">
    <location>
        <begin position="93"/>
        <end position="103"/>
    </location>
</feature>
<feature type="helix" evidence="32">
    <location>
        <begin position="108"/>
        <end position="124"/>
    </location>
</feature>
<feature type="helix" evidence="32">
    <location>
        <begin position="126"/>
        <end position="128"/>
    </location>
</feature>
<feature type="helix" evidence="32">
    <location>
        <begin position="129"/>
        <end position="142"/>
    </location>
</feature>
<feature type="turn" evidence="32">
    <location>
        <begin position="149"/>
        <end position="152"/>
    </location>
</feature>
<feature type="helix" evidence="32">
    <location>
        <begin position="162"/>
        <end position="182"/>
    </location>
</feature>
<feature type="strand" evidence="32">
    <location>
        <begin position="188"/>
        <end position="190"/>
    </location>
</feature>
<feature type="helix" evidence="32">
    <location>
        <begin position="196"/>
        <end position="218"/>
    </location>
</feature>
<feature type="turn" evidence="32">
    <location>
        <begin position="219"/>
        <end position="221"/>
    </location>
</feature>
<feature type="helix" evidence="32">
    <location>
        <begin position="225"/>
        <end position="236"/>
    </location>
</feature>
<feature type="strand" evidence="32">
    <location>
        <begin position="240"/>
        <end position="242"/>
    </location>
</feature>
<feature type="helix" evidence="32">
    <location>
        <begin position="244"/>
        <end position="246"/>
    </location>
</feature>
<feature type="helix" evidence="32">
    <location>
        <begin position="248"/>
        <end position="265"/>
    </location>
</feature>
<feature type="helix" evidence="32">
    <location>
        <begin position="268"/>
        <end position="270"/>
    </location>
</feature>
<feature type="helix" evidence="32">
    <location>
        <begin position="271"/>
        <end position="282"/>
    </location>
</feature>
<feature type="turn" evidence="32">
    <location>
        <begin position="283"/>
        <end position="286"/>
    </location>
</feature>
<feature type="helix" evidence="32">
    <location>
        <begin position="292"/>
        <end position="306"/>
    </location>
</feature>
<feature type="turn" evidence="32">
    <location>
        <begin position="307"/>
        <end position="309"/>
    </location>
</feature>
<feature type="helix" evidence="31">
    <location>
        <begin position="541"/>
        <end position="558"/>
    </location>
</feature>
<feature type="helix" evidence="31">
    <location>
        <begin position="561"/>
        <end position="571"/>
    </location>
</feature>
<feature type="helix" evidence="31">
    <location>
        <begin position="575"/>
        <end position="577"/>
    </location>
</feature>
<feature type="helix" evidence="31">
    <location>
        <begin position="578"/>
        <end position="590"/>
    </location>
</feature>
<feature type="helix" evidence="31">
    <location>
        <begin position="594"/>
        <end position="609"/>
    </location>
</feature>
<feature type="helix" evidence="31">
    <location>
        <begin position="615"/>
        <end position="627"/>
    </location>
</feature>
<feature type="helix" evidence="31">
    <location>
        <begin position="629"/>
        <end position="635"/>
    </location>
</feature>
<feature type="helix" evidence="31">
    <location>
        <begin position="639"/>
        <end position="652"/>
    </location>
</feature>
<feature type="helix" evidence="31">
    <location>
        <begin position="658"/>
        <end position="665"/>
    </location>
</feature>
<feature type="helix" evidence="31">
    <location>
        <begin position="666"/>
        <end position="668"/>
    </location>
</feature>
<feature type="turn" evidence="31">
    <location>
        <begin position="669"/>
        <end position="672"/>
    </location>
</feature>
<feature type="helix" evidence="31">
    <location>
        <begin position="673"/>
        <end position="684"/>
    </location>
</feature>
<feature type="helix" evidence="31">
    <location>
        <begin position="687"/>
        <end position="697"/>
    </location>
</feature>
<feature type="helix" evidence="31">
    <location>
        <begin position="702"/>
        <end position="704"/>
    </location>
</feature>
<feature type="helix" evidence="31">
    <location>
        <begin position="707"/>
        <end position="709"/>
    </location>
</feature>
<feature type="helix" evidence="31">
    <location>
        <begin position="712"/>
        <end position="722"/>
    </location>
</feature>
<feature type="helix" evidence="31">
    <location>
        <begin position="725"/>
        <end position="727"/>
    </location>
</feature>
<feature type="helix" evidence="30">
    <location>
        <begin position="731"/>
        <end position="743"/>
    </location>
</feature>
<feature type="helix" evidence="30">
    <location>
        <begin position="747"/>
        <end position="757"/>
    </location>
</feature>
<feature type="helix" evidence="30">
    <location>
        <begin position="760"/>
        <end position="764"/>
    </location>
</feature>
<feature type="helix" evidence="30">
    <location>
        <begin position="766"/>
        <end position="784"/>
    </location>
</feature>
<feature type="helix" evidence="30">
    <location>
        <begin position="799"/>
        <end position="820"/>
    </location>
</feature>
<feature type="helix" evidence="30">
    <location>
        <begin position="824"/>
        <end position="840"/>
    </location>
</feature>
<feature type="helix" evidence="30">
    <location>
        <begin position="847"/>
        <end position="857"/>
    </location>
</feature>
<feature type="helix" evidence="30">
    <location>
        <begin position="863"/>
        <end position="871"/>
    </location>
</feature>
<feature type="helix" evidence="30">
    <location>
        <begin position="880"/>
        <end position="895"/>
    </location>
</feature>
<proteinExistence type="evidence at protein level"/>
<comment type="function">
    <text evidence="4 5 11 12">Appears to play a role in the switch from cap-dependent to IRES-mediated translation during mitosis, apoptosis and viral infection. Cleaved by some caspases and viral proteases.</text>
</comment>
<comment type="subunit">
    <text evidence="8 9 10 12 13">Interacts with the serine/threonine protein kinases MKNK1 and MKNK2 (PubMed:9878069). Binds EIF4A and EIF3 (PubMed:9030685, PubMed:9049310). Interacts with MIF4GD (PubMed:18025107). Interacts with DAZAP2 (PubMed:17984221).</text>
</comment>
<comment type="interaction">
    <interactant intactId="EBI-296519">
        <id>P78344</id>
    </interactant>
    <interactant intactId="EBI-711977">
        <id>P20042</id>
        <label>EIF2S2</label>
    </interactant>
    <organismsDiffer>false</organismsDiffer>
    <experiments>4</experiments>
</comment>
<comment type="interaction">
    <interactant intactId="EBI-296519">
        <id>P78344</id>
    </interactant>
    <interactant intactId="EBI-73449">
        <id>P60842</id>
        <label>EIF4A1</label>
    </interactant>
    <organismsDiffer>false</organismsDiffer>
    <experiments>5</experiments>
</comment>
<comment type="interaction">
    <interactant intactId="EBI-296519">
        <id>P78344</id>
    </interactant>
    <interactant intactId="EBI-352682">
        <id>P04792</id>
        <label>HSPB1</label>
    </interactant>
    <organismsDiffer>false</organismsDiffer>
    <experiments>3</experiments>
</comment>
<comment type="interaction">
    <interactant intactId="EBI-296519">
        <id>P78344</id>
    </interactant>
    <interactant intactId="EBI-8826747">
        <id>PRO_0000308465</id>
        <dbReference type="UniProtKB" id="P29991"/>
    </interactant>
    <organismsDiffer>true</organismsDiffer>
    <experiments>4</experiments>
</comment>
<comment type="interaction">
    <interactant intactId="EBI-16040248">
        <id>P78344-1</id>
    </interactant>
    <interactant intactId="EBI-73449">
        <id>P60842</id>
        <label>EIF4A1</label>
    </interactant>
    <organismsDiffer>false</organismsDiffer>
    <experiments>3</experiments>
</comment>
<comment type="alternative products">
    <event type="alternative splicing"/>
    <isoform>
        <id>P78344-1</id>
        <name>1</name>
        <sequence type="displayed"/>
    </isoform>
    <isoform>
        <id>P78344-2</id>
        <name>2</name>
        <sequence type="described" ref="VSP_038726"/>
    </isoform>
</comment>
<comment type="tissue specificity">
    <text evidence="10 11 12">Ubiquitously expressed in all adult tissues examined, with high levels in skeletal muscle and heart. Also expressed in fetal brain, lung, liver and kidney.</text>
</comment>
<comment type="PTM">
    <text evidence="4">Phosphorylation; hyperphosphorylated during mitosis.</text>
</comment>
<comment type="miscellaneous">
    <text>This gene has been shown to be extensively edited in the liver of APOBEC1 transgenic animal model. Its aberrant editing could contribute to the potent oncogenesis induced by overexpression of APOBEC1. The aberrant edited sequence, called NAT1, is likely to be a fundamental translational repressor.</text>
</comment>
<comment type="similarity">
    <text evidence="17">Belongs to the eukaryotic initiation factor 4G family.</text>
</comment>
<comment type="caution">
    <text evidence="17">According to PubMed:9049310, this sequence initiates exclusively at a GTG codon.</text>
</comment>
<comment type="sequence caution" evidence="17">
    <conflict type="erroneous initiation">
        <sequence resource="EMBL-CDS" id="BAB93515"/>
    </conflict>
    <text>Truncated N-terminus.</text>
</comment>
<comment type="sequence caution" evidence="17">
    <conflict type="miscellaneous discrepancy">
        <sequence resource="EMBL-CDS" id="BAD97268"/>
    </conflict>
    <text>Unusual initiator. The initiator methionine is coded by a non-canonical GTG valine codon.</text>
</comment>
<comment type="sequence caution" evidence="17">
    <conflict type="miscellaneous discrepancy">
        <sequence resource="EMBL-CDS" id="CAA61857"/>
    </conflict>
    <text>Unusual initiator. The initiator methionine is coded by a non-canonical GTG valine codon.</text>
</comment>
<dbReference type="EMBL" id="U73824">
    <property type="protein sequence ID" value="AAB49973.1"/>
    <property type="molecule type" value="mRNA"/>
</dbReference>
<dbReference type="EMBL" id="U76111">
    <property type="protein sequence ID" value="AAC51166.1"/>
    <property type="molecule type" value="mRNA"/>
</dbReference>
<dbReference type="EMBL" id="X89713">
    <property type="protein sequence ID" value="CAA61857.1"/>
    <property type="status" value="ALT_SEQ"/>
    <property type="molecule type" value="mRNA"/>
</dbReference>
<dbReference type="EMBL" id="AK223548">
    <property type="protein sequence ID" value="BAD97268.1"/>
    <property type="status" value="ALT_SEQ"/>
    <property type="molecule type" value="mRNA"/>
</dbReference>
<dbReference type="EMBL" id="AC116535">
    <property type="status" value="NOT_ANNOTATED_CDS"/>
    <property type="molecule type" value="Genomic_DNA"/>
</dbReference>
<dbReference type="EMBL" id="BC014930">
    <property type="protein sequence ID" value="AAH14930.2"/>
    <property type="molecule type" value="mRNA"/>
</dbReference>
<dbReference type="EMBL" id="BC018746">
    <property type="protein sequence ID" value="AAH18746.1"/>
    <property type="molecule type" value="mRNA"/>
</dbReference>
<dbReference type="EMBL" id="BC018975">
    <property type="protein sequence ID" value="AAH18975.1"/>
    <property type="molecule type" value="mRNA"/>
</dbReference>
<dbReference type="EMBL" id="BC039851">
    <property type="protein sequence ID" value="AAH39851.1"/>
    <property type="molecule type" value="mRNA"/>
</dbReference>
<dbReference type="EMBL" id="BC043149">
    <property type="protein sequence ID" value="AAH43149.2"/>
    <property type="molecule type" value="mRNA"/>
</dbReference>
<dbReference type="EMBL" id="BC111415">
    <property type="protein sequence ID" value="AAI11416.1"/>
    <property type="molecule type" value="mRNA"/>
</dbReference>
<dbReference type="EMBL" id="BC111548">
    <property type="protein sequence ID" value="AAI11549.2"/>
    <property type="molecule type" value="mRNA"/>
</dbReference>
<dbReference type="EMBL" id="AB063323">
    <property type="protein sequence ID" value="BAB93515.1"/>
    <property type="status" value="ALT_INIT"/>
    <property type="molecule type" value="mRNA"/>
</dbReference>
<dbReference type="CCDS" id="CCDS31428.1">
    <molecule id="P78344-1"/>
</dbReference>
<dbReference type="CCDS" id="CCDS41618.1">
    <molecule id="P78344-2"/>
</dbReference>
<dbReference type="RefSeq" id="NP_001036024.3">
    <molecule id="P78344-2"/>
    <property type="nucleotide sequence ID" value="NM_001042559.3"/>
</dbReference>
<dbReference type="RefSeq" id="NP_001166176.1">
    <molecule id="P78344-1"/>
    <property type="nucleotide sequence ID" value="NM_001172705.1"/>
</dbReference>
<dbReference type="RefSeq" id="NP_001409.3">
    <molecule id="P78344-1"/>
    <property type="nucleotide sequence ID" value="NM_001418.4"/>
</dbReference>
<dbReference type="PDB" id="3D3M">
    <property type="method" value="X-ray"/>
    <property type="resolution" value="1.90 A"/>
    <property type="chains" value="A/B=730-897"/>
</dbReference>
<dbReference type="PDB" id="3L6A">
    <property type="method" value="X-ray"/>
    <property type="resolution" value="2.00 A"/>
    <property type="chains" value="A=540-897"/>
</dbReference>
<dbReference type="PDB" id="4IUL">
    <property type="method" value="X-ray"/>
    <property type="resolution" value="2.30 A"/>
    <property type="chains" value="A/B=61-323"/>
</dbReference>
<dbReference type="PDB" id="9JJ7">
    <property type="method" value="X-ray"/>
    <property type="resolution" value="1.80 A"/>
    <property type="chains" value="C=446-455"/>
</dbReference>
<dbReference type="PDBsum" id="3D3M"/>
<dbReference type="PDBsum" id="3L6A"/>
<dbReference type="PDBsum" id="4IUL"/>
<dbReference type="PDBsum" id="9JJ7"/>
<dbReference type="SMR" id="P78344"/>
<dbReference type="BioGRID" id="108297">
    <property type="interactions" value="224"/>
</dbReference>
<dbReference type="DIP" id="DIP-31366N"/>
<dbReference type="FunCoup" id="P78344">
    <property type="interactions" value="2126"/>
</dbReference>
<dbReference type="IntAct" id="P78344">
    <property type="interactions" value="88"/>
</dbReference>
<dbReference type="MINT" id="P78344"/>
<dbReference type="STRING" id="9606.ENSP00000433664"/>
<dbReference type="GlyCosmos" id="P78344">
    <property type="glycosylation" value="1 site, 1 glycan"/>
</dbReference>
<dbReference type="GlyGen" id="P78344">
    <property type="glycosylation" value="4 sites, 2 N-linked glycans (2 sites), 1 O-linked glycan (2 sites)"/>
</dbReference>
<dbReference type="iPTMnet" id="P78344"/>
<dbReference type="MetOSite" id="P78344"/>
<dbReference type="PhosphoSitePlus" id="P78344"/>
<dbReference type="SwissPalm" id="P78344"/>
<dbReference type="BioMuta" id="EIF4G2"/>
<dbReference type="DMDM" id="30315906"/>
<dbReference type="jPOST" id="P78344"/>
<dbReference type="MassIVE" id="P78344"/>
<dbReference type="PaxDb" id="9606-ENSP00000433664"/>
<dbReference type="PeptideAtlas" id="P78344"/>
<dbReference type="ProteomicsDB" id="57574">
    <molecule id="P78344-1"/>
</dbReference>
<dbReference type="ProteomicsDB" id="57575">
    <molecule id="P78344-2"/>
</dbReference>
<dbReference type="Pumba" id="P78344"/>
<dbReference type="Antibodypedia" id="1569">
    <property type="antibodies" value="455 antibodies from 41 providers"/>
</dbReference>
<dbReference type="DNASU" id="1982"/>
<dbReference type="Ensembl" id="ENST00000339995.11">
    <molecule id="P78344-1"/>
    <property type="protein sequence ID" value="ENSP00000340281.6"/>
    <property type="gene ID" value="ENSG00000110321.19"/>
</dbReference>
<dbReference type="Ensembl" id="ENST00000396525.7">
    <molecule id="P78344-2"/>
    <property type="protein sequence ID" value="ENSP00000379778.3"/>
    <property type="gene ID" value="ENSG00000110321.19"/>
</dbReference>
<dbReference type="Ensembl" id="ENST00000525681.6">
    <molecule id="P78344-1"/>
    <property type="protein sequence ID" value="ENSP00000433371.2"/>
    <property type="gene ID" value="ENSG00000110321.19"/>
</dbReference>
<dbReference type="Ensembl" id="ENST00000526148.6">
    <molecule id="P78344-1"/>
    <property type="protein sequence ID" value="ENSP00000433664.2"/>
    <property type="gene ID" value="ENSG00000110321.19"/>
</dbReference>
<dbReference type="GeneID" id="1982"/>
<dbReference type="KEGG" id="hsa:1982"/>
<dbReference type="MANE-Select" id="ENST00000339995.11">
    <property type="protein sequence ID" value="ENSP00000340281.6"/>
    <property type="RefSeq nucleotide sequence ID" value="NM_001418.4"/>
    <property type="RefSeq protein sequence ID" value="NP_001409.3"/>
</dbReference>
<dbReference type="UCSC" id="uc057zbi.1">
    <molecule id="P78344-1"/>
    <property type="organism name" value="human"/>
</dbReference>
<dbReference type="AGR" id="HGNC:3297"/>
<dbReference type="CTD" id="1982"/>
<dbReference type="DisGeNET" id="1982"/>
<dbReference type="GeneCards" id="EIF4G2"/>
<dbReference type="HGNC" id="HGNC:3297">
    <property type="gene designation" value="EIF4G2"/>
</dbReference>
<dbReference type="HPA" id="ENSG00000110321">
    <property type="expression patterns" value="Low tissue specificity"/>
</dbReference>
<dbReference type="MIM" id="602325">
    <property type="type" value="gene"/>
</dbReference>
<dbReference type="neXtProt" id="NX_P78344"/>
<dbReference type="OpenTargets" id="ENSG00000110321"/>
<dbReference type="PharmGKB" id="PA27723"/>
<dbReference type="VEuPathDB" id="HostDB:ENSG00000110321"/>
<dbReference type="eggNOG" id="KOG0401">
    <property type="taxonomic scope" value="Eukaryota"/>
</dbReference>
<dbReference type="GeneTree" id="ENSGT00940000154675"/>
<dbReference type="InParanoid" id="P78344"/>
<dbReference type="OMA" id="CAPLDIN"/>
<dbReference type="OrthoDB" id="514777at2759"/>
<dbReference type="PAN-GO" id="P78344">
    <property type="GO annotations" value="3 GO annotations based on evolutionary models"/>
</dbReference>
<dbReference type="PhylomeDB" id="P78344"/>
<dbReference type="PathwayCommons" id="P78344"/>
<dbReference type="Reactome" id="R-HSA-1169408">
    <property type="pathway name" value="ISG15 antiviral mechanism"/>
</dbReference>
<dbReference type="SignaLink" id="P78344"/>
<dbReference type="SIGNOR" id="P78344"/>
<dbReference type="BioGRID-ORCS" id="1982">
    <property type="hits" value="519 hits in 1085 CRISPR screens"/>
</dbReference>
<dbReference type="CD-CODE" id="232F8A39">
    <property type="entry name" value="P-body"/>
</dbReference>
<dbReference type="CD-CODE" id="DEE660B4">
    <property type="entry name" value="Stress granule"/>
</dbReference>
<dbReference type="ChiTaRS" id="EIF4G2">
    <property type="organism name" value="human"/>
</dbReference>
<dbReference type="EvolutionaryTrace" id="P78344"/>
<dbReference type="GeneWiki" id="EIF4G2"/>
<dbReference type="GenomeRNAi" id="1982"/>
<dbReference type="Pharos" id="P78344">
    <property type="development level" value="Tbio"/>
</dbReference>
<dbReference type="PRO" id="PR:P78344"/>
<dbReference type="Proteomes" id="UP000005640">
    <property type="component" value="Chromosome 11"/>
</dbReference>
<dbReference type="RNAct" id="P78344">
    <property type="molecule type" value="protein"/>
</dbReference>
<dbReference type="Bgee" id="ENSG00000110321">
    <property type="expression patterns" value="Expressed in visceral pleura and 210 other cell types or tissues"/>
</dbReference>
<dbReference type="ExpressionAtlas" id="P78344">
    <property type="expression patterns" value="baseline and differential"/>
</dbReference>
<dbReference type="GO" id="GO:0005912">
    <property type="term" value="C:adherens junction"/>
    <property type="evidence" value="ECO:0007005"/>
    <property type="project" value="BHF-UCL"/>
</dbReference>
<dbReference type="GO" id="GO:0005829">
    <property type="term" value="C:cytosol"/>
    <property type="evidence" value="ECO:0000314"/>
    <property type="project" value="HPA"/>
</dbReference>
<dbReference type="GO" id="GO:0016281">
    <property type="term" value="C:eukaryotic translation initiation factor 4F complex"/>
    <property type="evidence" value="ECO:0000314"/>
    <property type="project" value="UniProtKB"/>
</dbReference>
<dbReference type="GO" id="GO:0016020">
    <property type="term" value="C:membrane"/>
    <property type="evidence" value="ECO:0007005"/>
    <property type="project" value="UniProtKB"/>
</dbReference>
<dbReference type="GO" id="GO:0045296">
    <property type="term" value="F:cadherin binding"/>
    <property type="evidence" value="ECO:0007005"/>
    <property type="project" value="BHF-UCL"/>
</dbReference>
<dbReference type="GO" id="GO:0003729">
    <property type="term" value="F:mRNA binding"/>
    <property type="evidence" value="ECO:0000318"/>
    <property type="project" value="GO_Central"/>
</dbReference>
<dbReference type="GO" id="GO:0003723">
    <property type="term" value="F:RNA binding"/>
    <property type="evidence" value="ECO:0007005"/>
    <property type="project" value="UniProtKB"/>
</dbReference>
<dbReference type="GO" id="GO:0008135">
    <property type="term" value="F:translation factor activity, RNA binding"/>
    <property type="evidence" value="ECO:0000314"/>
    <property type="project" value="UniProtKB"/>
</dbReference>
<dbReference type="GO" id="GO:0003743">
    <property type="term" value="F:translation initiation factor activity"/>
    <property type="evidence" value="ECO:0000314"/>
    <property type="project" value="UniProtKB"/>
</dbReference>
<dbReference type="GO" id="GO:0008219">
    <property type="term" value="P:cell death"/>
    <property type="evidence" value="ECO:0000304"/>
    <property type="project" value="ProtInc"/>
</dbReference>
<dbReference type="GO" id="GO:0010507">
    <property type="term" value="P:negative regulation of autophagy"/>
    <property type="evidence" value="ECO:0000315"/>
    <property type="project" value="ParkinsonsUK-UCL"/>
</dbReference>
<dbReference type="GO" id="GO:0030307">
    <property type="term" value="P:positive regulation of cell growth"/>
    <property type="evidence" value="ECO:0000315"/>
    <property type="project" value="ParkinsonsUK-UCL"/>
</dbReference>
<dbReference type="GO" id="GO:0051726">
    <property type="term" value="P:regulation of cell cycle"/>
    <property type="evidence" value="ECO:0000304"/>
    <property type="project" value="ProtInc"/>
</dbReference>
<dbReference type="GO" id="GO:0006446">
    <property type="term" value="P:regulation of translational initiation"/>
    <property type="evidence" value="ECO:0000314"/>
    <property type="project" value="UniProtKB"/>
</dbReference>
<dbReference type="GO" id="GO:0006413">
    <property type="term" value="P:translational initiation"/>
    <property type="evidence" value="ECO:0000318"/>
    <property type="project" value="GO_Central"/>
</dbReference>
<dbReference type="CDD" id="cd11559">
    <property type="entry name" value="W2_eIF4G1_like"/>
    <property type="match status" value="1"/>
</dbReference>
<dbReference type="FunFam" id="1.25.40.180:FF:000007">
    <property type="entry name" value="Eukaryotic translation initiation factor 4 gamma 2"/>
    <property type="match status" value="1"/>
</dbReference>
<dbReference type="FunFam" id="1.25.40.180:FF:000011">
    <property type="entry name" value="Eukaryotic translation initiation factor 4 gamma 2"/>
    <property type="match status" value="1"/>
</dbReference>
<dbReference type="FunFam" id="1.25.40.180:FF:000017">
    <property type="entry name" value="Eukaryotic translation initiation factor 4 gamma 2"/>
    <property type="match status" value="1"/>
</dbReference>
<dbReference type="Gene3D" id="1.25.40.180">
    <property type="match status" value="3"/>
</dbReference>
<dbReference type="InterPro" id="IPR016024">
    <property type="entry name" value="ARM-type_fold"/>
</dbReference>
<dbReference type="InterPro" id="IPR003891">
    <property type="entry name" value="Initiation_fac_eIF4g_MI"/>
</dbReference>
<dbReference type="InterPro" id="IPR003890">
    <property type="entry name" value="MIF4G-like_typ-3"/>
</dbReference>
<dbReference type="InterPro" id="IPR003307">
    <property type="entry name" value="W2_domain"/>
</dbReference>
<dbReference type="PANTHER" id="PTHR23253">
    <property type="entry name" value="EUKARYOTIC TRANSLATION INITIATION FACTOR 4 GAMMA"/>
    <property type="match status" value="1"/>
</dbReference>
<dbReference type="PANTHER" id="PTHR23253:SF9">
    <property type="entry name" value="EUKARYOTIC TRANSLATION INITIATION FACTOR 4 GAMMA 2"/>
    <property type="match status" value="1"/>
</dbReference>
<dbReference type="Pfam" id="PF02847">
    <property type="entry name" value="MA3"/>
    <property type="match status" value="1"/>
</dbReference>
<dbReference type="Pfam" id="PF02854">
    <property type="entry name" value="MIF4G"/>
    <property type="match status" value="1"/>
</dbReference>
<dbReference type="Pfam" id="PF02020">
    <property type="entry name" value="W2"/>
    <property type="match status" value="1"/>
</dbReference>
<dbReference type="SMART" id="SM00515">
    <property type="entry name" value="eIF5C"/>
    <property type="match status" value="1"/>
</dbReference>
<dbReference type="SMART" id="SM00544">
    <property type="entry name" value="MA3"/>
    <property type="match status" value="1"/>
</dbReference>
<dbReference type="SMART" id="SM00543">
    <property type="entry name" value="MIF4G"/>
    <property type="match status" value="1"/>
</dbReference>
<dbReference type="SUPFAM" id="SSF48371">
    <property type="entry name" value="ARM repeat"/>
    <property type="match status" value="3"/>
</dbReference>
<dbReference type="PROSITE" id="PS51366">
    <property type="entry name" value="MI"/>
    <property type="match status" value="1"/>
</dbReference>
<dbReference type="PROSITE" id="PS51363">
    <property type="entry name" value="W2"/>
    <property type="match status" value="1"/>
</dbReference>
<organism>
    <name type="scientific">Homo sapiens</name>
    <name type="common">Human</name>
    <dbReference type="NCBI Taxonomy" id="9606"/>
    <lineage>
        <taxon>Eukaryota</taxon>
        <taxon>Metazoa</taxon>
        <taxon>Chordata</taxon>
        <taxon>Craniata</taxon>
        <taxon>Vertebrata</taxon>
        <taxon>Euteleostomi</taxon>
        <taxon>Mammalia</taxon>
        <taxon>Eutheria</taxon>
        <taxon>Euarchontoglires</taxon>
        <taxon>Primates</taxon>
        <taxon>Haplorrhini</taxon>
        <taxon>Catarrhini</taxon>
        <taxon>Hominidae</taxon>
        <taxon>Homo</taxon>
    </lineage>
</organism>
<gene>
    <name evidence="18" type="primary">EIF4G2</name>
    <name evidence="16" type="synonym">DAP5</name>
    <name type="ORF">OK/SW-cl.75</name>
</gene>
<sequence length="907" mass="102362">MESAIAEGGASRFSASSGGGGSRGAPQHYPKTAGNSEFLGKTPGQNAQKWIPARSTRRDDNSAANNSANEKERHDAIFRKVRGILNKLTPEKFDKLCLELLNVGVESKLILKGVILLIVDKALEEPKYSSLYAQLCLRLAEDAPNFDGPAAEGQPGQKQSTTFRRLLISKLQDEFENRTRNVDVYDKRENPLLPEEEEQRAIAKIKMLGNIKFIGELGKLDLIHESILHKCIKTLLEKKKRVQLKDMGEDLECLCQIMRTVGPRLDHERAKSLMDQYFARMCSLMLSKELPARIRFLLQDTVELREHHWVPRKAFLDNGPKTINQIRQDAVKDLGVFIPAPMAQGMRSDFFLEGPFMPPRMKMDRDPLGGLADMFGQMPGSGIGTGPGVIQDRFSPTMGRHRSNQLFNGHGGHIMPPTQSQFGEMGGKFMKSQGLSQLYHNQSQGLLSQLQGQSKDMPPRFSKKGQLNADEISLRPAQSFLMNKNQVPKLQPQITMIPPSAQPPRTQTPPLGQTPQLGLKTNPPLIQEKPAKTSKKPPPSKEELLKLTETVVTEYLNSGNANEAVNGVREMRAPKHFLPEMLSKVIILSLDRSDEDKEKASSLISLLKQEGIATSDNFMQAFLNVLDQCPKLEVDIPLVKSYLAQFAARAIISELVSISELAQPLESGTHFPLFLLCLQQLAKLQDREWLTELFQQSKVNMQKMLPEIDQNKDRMLEILEGKGLSFLFPLLKLEKELLKQIKLDPSPQTIYKWIKDNISPKLHVDKGFVNILMTSFLQYISSEVNPPSDETDSSSAPSKEQLEQEKQLLLSFKPVMQKFLHDHVDLQVSALYALQVHCYNSNFPKGMLLRFFVHFYDMEIIEEEAFLAWKEDITQEFPGKGKALFQVNQWLTWLETAEEEESEEEAD</sequence>
<keyword id="KW-0002">3D-structure</keyword>
<keyword id="KW-0007">Acetylation</keyword>
<keyword id="KW-0025">Alternative splicing</keyword>
<keyword id="KW-0903">Direct protein sequencing</keyword>
<keyword id="KW-0396">Initiation factor</keyword>
<keyword id="KW-1017">Isopeptide bond</keyword>
<keyword id="KW-0488">Methylation</keyword>
<keyword id="KW-0597">Phosphoprotein</keyword>
<keyword id="KW-0648">Protein biosynthesis</keyword>
<keyword id="KW-1267">Proteomics identification</keyword>
<keyword id="KW-1185">Reference proteome</keyword>
<keyword id="KW-0678">Repressor</keyword>
<keyword id="KW-0810">Translation regulation</keyword>
<keyword id="KW-0832">Ubl conjugation</keyword>
<accession>P78344</accession>
<accession>O60877</accession>
<accession>P78404</accession>
<accession>Q0VH00</accession>
<accession>Q0VH01</accession>
<accession>Q2NKW9</accession>
<accession>Q49A79</accession>
<accession>Q53EU1</accession>
<accession>Q58EZ2</accession>
<accession>Q8NI71</accession>
<accession>Q96C16</accession>
<evidence type="ECO:0000255" key="1">
    <source>
        <dbReference type="PROSITE-ProRule" id="PRU00695"/>
    </source>
</evidence>
<evidence type="ECO:0000255" key="2">
    <source>
        <dbReference type="PROSITE-ProRule" id="PRU00698"/>
    </source>
</evidence>
<evidence type="ECO:0000256" key="3">
    <source>
        <dbReference type="SAM" id="MobiDB-lite"/>
    </source>
</evidence>
<evidence type="ECO:0000269" key="4">
    <source>
    </source>
</evidence>
<evidence type="ECO:0000269" key="5">
    <source>
    </source>
</evidence>
<evidence type="ECO:0000269" key="6">
    <source>
    </source>
</evidence>
<evidence type="ECO:0000269" key="7">
    <source>
    </source>
</evidence>
<evidence type="ECO:0000269" key="8">
    <source>
    </source>
</evidence>
<evidence type="ECO:0000269" key="9">
    <source>
    </source>
</evidence>
<evidence type="ECO:0000269" key="10">
    <source>
    </source>
</evidence>
<evidence type="ECO:0000269" key="11">
    <source>
    </source>
</evidence>
<evidence type="ECO:0000269" key="12">
    <source>
    </source>
</evidence>
<evidence type="ECO:0000269" key="13">
    <source>
    </source>
</evidence>
<evidence type="ECO:0000269" key="14">
    <source ref="8"/>
</evidence>
<evidence type="ECO:0000303" key="15">
    <source>
    </source>
</evidence>
<evidence type="ECO:0000303" key="16">
    <source>
    </source>
</evidence>
<evidence type="ECO:0000305" key="17"/>
<evidence type="ECO:0000312" key="18">
    <source>
        <dbReference type="HGNC" id="HGNC:3297"/>
    </source>
</evidence>
<evidence type="ECO:0007744" key="19">
    <source>
    </source>
</evidence>
<evidence type="ECO:0007744" key="20">
    <source>
    </source>
</evidence>
<evidence type="ECO:0007744" key="21">
    <source>
    </source>
</evidence>
<evidence type="ECO:0007744" key="22">
    <source>
    </source>
</evidence>
<evidence type="ECO:0007744" key="23">
    <source>
    </source>
</evidence>
<evidence type="ECO:0007744" key="24">
    <source>
    </source>
</evidence>
<evidence type="ECO:0007744" key="25">
    <source>
    </source>
</evidence>
<evidence type="ECO:0007744" key="26">
    <source>
    </source>
</evidence>
<evidence type="ECO:0007744" key="27">
    <source>
    </source>
</evidence>
<evidence type="ECO:0007744" key="28">
    <source>
    </source>
</evidence>
<evidence type="ECO:0007744" key="29">
    <source>
    </source>
</evidence>
<evidence type="ECO:0007829" key="30">
    <source>
        <dbReference type="PDB" id="3D3M"/>
    </source>
</evidence>
<evidence type="ECO:0007829" key="31">
    <source>
        <dbReference type="PDB" id="3L6A"/>
    </source>
</evidence>
<evidence type="ECO:0007829" key="32">
    <source>
        <dbReference type="PDB" id="4IUL"/>
    </source>
</evidence>
<protein>
    <recommendedName>
        <fullName>Eukaryotic translation initiation factor 4 gamma 2</fullName>
        <shortName>eIF-4-gamma 2</shortName>
        <shortName>eIF-4G 2</shortName>
        <shortName>eIF4G 2</shortName>
    </recommendedName>
    <alternativeName>
        <fullName>Death-associated protein 5</fullName>
        <shortName>DAP-5</shortName>
    </alternativeName>
    <alternativeName>
        <fullName>p97</fullName>
    </alternativeName>
</protein>